<accession>O94225</accession>
<accession>B6HST1</accession>
<feature type="transit peptide" description="Mitochondrion" evidence="2">
    <location>
        <begin position="1"/>
        <end status="unknown"/>
    </location>
</feature>
<feature type="chain" id="PRO_0000001048" description="Homocitrate synthase, mitochondrial">
    <location>
        <begin status="unknown"/>
        <end position="474"/>
    </location>
</feature>
<feature type="domain" description="Pyruvate carboxyltransferase" evidence="3">
    <location>
        <begin position="67"/>
        <end position="320"/>
    </location>
</feature>
<feature type="active site" description="Proton acceptor" evidence="1">
    <location>
        <position position="353"/>
    </location>
</feature>
<feature type="binding site" evidence="1">
    <location>
        <position position="75"/>
    </location>
    <ligand>
        <name>2-oxoglutarate</name>
        <dbReference type="ChEBI" id="CHEBI:16810"/>
    </ligand>
</feature>
<feature type="binding site" evidence="1">
    <location>
        <position position="76"/>
    </location>
    <ligand>
        <name>Mg(2+)</name>
        <dbReference type="ChEBI" id="CHEBI:18420"/>
    </ligand>
</feature>
<feature type="binding site" evidence="1">
    <location>
        <position position="135"/>
    </location>
    <ligand>
        <name>2-oxoglutarate</name>
        <dbReference type="ChEBI" id="CHEBI:16810"/>
    </ligand>
</feature>
<feature type="binding site" evidence="1">
    <location>
        <position position="195"/>
    </location>
    <ligand>
        <name>2-oxoglutarate</name>
        <dbReference type="ChEBI" id="CHEBI:16810"/>
    </ligand>
</feature>
<feature type="binding site" evidence="1">
    <location>
        <position position="229"/>
    </location>
    <ligand>
        <name>2-oxoglutarate</name>
        <dbReference type="ChEBI" id="CHEBI:16810"/>
    </ligand>
</feature>
<feature type="binding site" evidence="1">
    <location>
        <position position="256"/>
    </location>
    <ligand>
        <name>Mg(2+)</name>
        <dbReference type="ChEBI" id="CHEBI:18420"/>
    </ligand>
</feature>
<feature type="binding site" evidence="1">
    <location>
        <position position="258"/>
    </location>
    <ligand>
        <name>Mg(2+)</name>
        <dbReference type="ChEBI" id="CHEBI:18420"/>
    </ligand>
</feature>
<keyword id="KW-0028">Amino-acid biosynthesis</keyword>
<keyword id="KW-0457">Lysine biosynthesis</keyword>
<keyword id="KW-0460">Magnesium</keyword>
<keyword id="KW-0464">Manganese</keyword>
<keyword id="KW-0479">Metal-binding</keyword>
<keyword id="KW-0496">Mitochondrion</keyword>
<keyword id="KW-1185">Reference proteome</keyword>
<keyword id="KW-0808">Transferase</keyword>
<keyword id="KW-0809">Transit peptide</keyword>
<organism>
    <name type="scientific">Penicillium rubens (strain ATCC 28089 / DSM 1075 / NRRL 1951 / Wisconsin 54-1255)</name>
    <name type="common">Penicillium chrysogenum</name>
    <dbReference type="NCBI Taxonomy" id="500485"/>
    <lineage>
        <taxon>Eukaryota</taxon>
        <taxon>Fungi</taxon>
        <taxon>Dikarya</taxon>
        <taxon>Ascomycota</taxon>
        <taxon>Pezizomycotina</taxon>
        <taxon>Eurotiomycetes</taxon>
        <taxon>Eurotiomycetidae</taxon>
        <taxon>Eurotiales</taxon>
        <taxon>Aspergillaceae</taxon>
        <taxon>Penicillium</taxon>
        <taxon>Penicillium chrysogenum species complex</taxon>
    </lineage>
</organism>
<dbReference type="EC" id="2.3.3.14" evidence="1"/>
<dbReference type="EMBL" id="AJ223630">
    <property type="protein sequence ID" value="CAA11503.1"/>
    <property type="molecule type" value="Genomic_DNA"/>
</dbReference>
<dbReference type="EMBL" id="AM920437">
    <property type="protein sequence ID" value="CAP98607.1"/>
    <property type="molecule type" value="Genomic_DNA"/>
</dbReference>
<dbReference type="RefSeq" id="XP_002565245.1">
    <property type="nucleotide sequence ID" value="XM_002565199.1"/>
</dbReference>
<dbReference type="SMR" id="O94225"/>
<dbReference type="STRING" id="500485.O94225"/>
<dbReference type="VEuPathDB" id="FungiDB:PCH_Pc22g13190"/>
<dbReference type="eggNOG" id="KOG2367">
    <property type="taxonomic scope" value="Eukaryota"/>
</dbReference>
<dbReference type="HOGENOM" id="CLU_022158_2_2_1"/>
<dbReference type="OMA" id="NTMRMLV"/>
<dbReference type="OrthoDB" id="2015253at2759"/>
<dbReference type="UniPathway" id="UPA00033">
    <property type="reaction ID" value="UER00028"/>
</dbReference>
<dbReference type="Proteomes" id="UP000000724">
    <property type="component" value="Contig Pc00c22"/>
</dbReference>
<dbReference type="GO" id="GO:0005739">
    <property type="term" value="C:mitochondrion"/>
    <property type="evidence" value="ECO:0007669"/>
    <property type="project" value="UniProtKB-SubCell"/>
</dbReference>
<dbReference type="GO" id="GO:0004410">
    <property type="term" value="F:homocitrate synthase activity"/>
    <property type="evidence" value="ECO:0007669"/>
    <property type="project" value="UniProtKB-EC"/>
</dbReference>
<dbReference type="GO" id="GO:0046872">
    <property type="term" value="F:metal ion binding"/>
    <property type="evidence" value="ECO:0007669"/>
    <property type="project" value="UniProtKB-KW"/>
</dbReference>
<dbReference type="GO" id="GO:0019878">
    <property type="term" value="P:lysine biosynthetic process via aminoadipic acid"/>
    <property type="evidence" value="ECO:0007669"/>
    <property type="project" value="UniProtKB-UniPathway"/>
</dbReference>
<dbReference type="CDD" id="cd07948">
    <property type="entry name" value="DRE_TIM_HCS"/>
    <property type="match status" value="1"/>
</dbReference>
<dbReference type="FunFam" id="1.10.238.260:FF:000002">
    <property type="entry name" value="Homocitrate synthase, mitochondrial"/>
    <property type="match status" value="1"/>
</dbReference>
<dbReference type="FunFam" id="3.20.20.70:FF:000032">
    <property type="entry name" value="Homocitrate synthase, mitochondrial"/>
    <property type="match status" value="1"/>
</dbReference>
<dbReference type="Gene3D" id="1.10.238.260">
    <property type="match status" value="1"/>
</dbReference>
<dbReference type="Gene3D" id="3.20.20.70">
    <property type="entry name" value="Aldolase class I"/>
    <property type="match status" value="1"/>
</dbReference>
<dbReference type="HAMAP" id="MF_02222">
    <property type="entry name" value="Homocitr_synth_fung_arch"/>
    <property type="match status" value="1"/>
</dbReference>
<dbReference type="InterPro" id="IPR050073">
    <property type="entry name" value="2-IPM_HCS-like"/>
</dbReference>
<dbReference type="InterPro" id="IPR002034">
    <property type="entry name" value="AIPM/Hcit_synth_CS"/>
</dbReference>
<dbReference type="InterPro" id="IPR013785">
    <property type="entry name" value="Aldolase_TIM"/>
</dbReference>
<dbReference type="InterPro" id="IPR048253">
    <property type="entry name" value="DRE_TIM_HCS_fun_bact"/>
</dbReference>
<dbReference type="InterPro" id="IPR011872">
    <property type="entry name" value="Homocitrate_synth"/>
</dbReference>
<dbReference type="InterPro" id="IPR054691">
    <property type="entry name" value="LeuA/HCS_post-cat"/>
</dbReference>
<dbReference type="InterPro" id="IPR000891">
    <property type="entry name" value="PYR_CT"/>
</dbReference>
<dbReference type="NCBIfam" id="TIGR02146">
    <property type="entry name" value="LysS_fung_arch"/>
    <property type="match status" value="1"/>
</dbReference>
<dbReference type="PANTHER" id="PTHR10277:SF48">
    <property type="entry name" value="HOMOCITRATE SYNTHASE, CYTOSOLIC ISOZYME-RELATED"/>
    <property type="match status" value="1"/>
</dbReference>
<dbReference type="PANTHER" id="PTHR10277">
    <property type="entry name" value="HOMOCITRATE SYNTHASE-RELATED"/>
    <property type="match status" value="1"/>
</dbReference>
<dbReference type="Pfam" id="PF22617">
    <property type="entry name" value="HCS_D2"/>
    <property type="match status" value="1"/>
</dbReference>
<dbReference type="Pfam" id="PF00682">
    <property type="entry name" value="HMGL-like"/>
    <property type="match status" value="1"/>
</dbReference>
<dbReference type="SUPFAM" id="SSF51569">
    <property type="entry name" value="Aldolase"/>
    <property type="match status" value="1"/>
</dbReference>
<dbReference type="PROSITE" id="PS00815">
    <property type="entry name" value="AIPM_HOMOCIT_SYNTH_1"/>
    <property type="match status" value="1"/>
</dbReference>
<dbReference type="PROSITE" id="PS00816">
    <property type="entry name" value="AIPM_HOMOCIT_SYNTH_2"/>
    <property type="match status" value="1"/>
</dbReference>
<dbReference type="PROSITE" id="PS50991">
    <property type="entry name" value="PYR_CT"/>
    <property type="match status" value="1"/>
</dbReference>
<protein>
    <recommendedName>
        <fullName>Homocitrate synthase, mitochondrial</fullName>
        <shortName>HCS</shortName>
        <ecNumber evidence="1">2.3.3.14</ecNumber>
    </recommendedName>
</protein>
<name>HOSM_PENRW</name>
<gene>
    <name type="primary">lys1</name>
    <name type="ORF">Pc22g13190</name>
</gene>
<sequence>MVLLPPSLPVCQLKVTAPEFPSNFYLDGDHSGFVGIETRQNPHPSASRNPYGHDAGVTDFLSNVSRFQIIESTLREGEQFANAFFDTAKKIEIAKALDDFGVDYIELTSPCASEQSRADCEAICKLGLKAKILTHIRCHMDDARIAVETGVDGVDVVIGTSSYLREHSHGKDMTYIKNAAIEVIEFVKSKGIEIRFSSEDSFRSDLVDLLSIYSAVDKVGVNRVGIADTVGCASPRQVYELVRVLRGVVGCDIETHFHNDTGCAIANAFCALEAGATHIDTSVLGIGERNGITPLGGLMARMMVADREYVKSKYKLEKLKEIEDLVAEAVEVNIPFNNYITGFCAFTHKAGIHAKAILNNPSTYEIINPADFGMSRYVHFASRLTGWNAIKSRAQQLKLEMTDTQYKECTAKIKAMADIRPIAVDDADSIIRAYHRNLKSGENKPLLDLTAEEQAAFAAKEKELLEAQAAGLPV</sequence>
<proteinExistence type="evidence at protein level"/>
<comment type="function">
    <text evidence="1">Catalyzes the aldol-type condensation of 2-oxoglutarate with acetyl-CoA to yield homocitrate. Carries out the first step of the alpha-aminoadipate (AAA) lysine biosynthesis pathway.</text>
</comment>
<comment type="catalytic activity">
    <reaction evidence="1">
        <text>acetyl-CoA + 2-oxoglutarate + H2O = (2R)-homocitrate + CoA + H(+)</text>
        <dbReference type="Rhea" id="RHEA:12929"/>
        <dbReference type="ChEBI" id="CHEBI:15377"/>
        <dbReference type="ChEBI" id="CHEBI:15378"/>
        <dbReference type="ChEBI" id="CHEBI:16810"/>
        <dbReference type="ChEBI" id="CHEBI:57287"/>
        <dbReference type="ChEBI" id="CHEBI:57288"/>
        <dbReference type="ChEBI" id="CHEBI:58884"/>
        <dbReference type="EC" id="2.3.3.14"/>
    </reaction>
    <physiologicalReaction direction="left-to-right" evidence="1">
        <dbReference type="Rhea" id="RHEA:12930"/>
    </physiologicalReaction>
</comment>
<comment type="cofactor">
    <cofactor evidence="1">
        <name>Mg(2+)</name>
        <dbReference type="ChEBI" id="CHEBI:18420"/>
    </cofactor>
    <cofactor evidence="1">
        <name>Mn(2+)</name>
        <dbReference type="ChEBI" id="CHEBI:29035"/>
    </cofactor>
</comment>
<comment type="pathway">
    <text evidence="1">Amino-acid biosynthesis; L-lysine biosynthesis via AAA pathway; L-alpha-aminoadipate from 2-oxoglutarate: step 1/5.</text>
</comment>
<comment type="subcellular location">
    <subcellularLocation>
        <location>Mitochondrion</location>
    </subcellularLocation>
</comment>
<comment type="similarity">
    <text evidence="4">Belongs to the alpha-IPM synthase/homocitrate synthase family. Homocitrate synthase LYS20/LYS21 subfamily.</text>
</comment>
<evidence type="ECO:0000250" key="1">
    <source>
        <dbReference type="UniProtKB" id="O87198"/>
    </source>
</evidence>
<evidence type="ECO:0000255" key="2"/>
<evidence type="ECO:0000255" key="3">
    <source>
        <dbReference type="PROSITE-ProRule" id="PRU01151"/>
    </source>
</evidence>
<evidence type="ECO:0000305" key="4"/>
<reference key="1">
    <citation type="journal article" date="1999" name="Gene">
        <title>Characterization and lysine control of expression of the lys1 gene of Penicillium chrysogenum encoding homocitrate synthase.</title>
        <authorList>
            <person name="Banuelos O."/>
            <person name="Casqueiro J."/>
            <person name="Fierro F."/>
            <person name="Hijarrubia M.J."/>
            <person name="Gutierrez S."/>
            <person name="Martin J.F."/>
        </authorList>
    </citation>
    <scope>NUCLEOTIDE SEQUENCE [GENOMIC DNA]</scope>
</reference>
<reference key="2">
    <citation type="journal article" date="2008" name="Nat. Biotechnol.">
        <title>Genome sequencing and analysis of the filamentous fungus Penicillium chrysogenum.</title>
        <authorList>
            <person name="van den Berg M.A."/>
            <person name="Albang R."/>
            <person name="Albermann K."/>
            <person name="Badger J.H."/>
            <person name="Daran J.-M."/>
            <person name="Driessen A.J.M."/>
            <person name="Garcia-Estrada C."/>
            <person name="Fedorova N.D."/>
            <person name="Harris D.M."/>
            <person name="Heijne W.H.M."/>
            <person name="Joardar V.S."/>
            <person name="Kiel J.A.K.W."/>
            <person name="Kovalchuk A."/>
            <person name="Martin J.F."/>
            <person name="Nierman W.C."/>
            <person name="Nijland J.G."/>
            <person name="Pronk J.T."/>
            <person name="Roubos J.A."/>
            <person name="van der Klei I.J."/>
            <person name="van Peij N.N.M.E."/>
            <person name="Veenhuis M."/>
            <person name="von Doehren H."/>
            <person name="Wagner C."/>
            <person name="Wortman J.R."/>
            <person name="Bovenberg R.A.L."/>
        </authorList>
    </citation>
    <scope>NUCLEOTIDE SEQUENCE [LARGE SCALE GENOMIC DNA]</scope>
    <source>
        <strain>ATCC 28089 / DSM 1075 / NRRL 1951 / Wisconsin 54-1255</strain>
    </source>
</reference>
<reference key="3">
    <citation type="journal article" date="1990" name="Biochem. J.">
        <title>Homocitrate synthase from Penicillium chrysogenum. Localization, purification of the cytosolic isoenzyme, and sensitivity to lysine.</title>
        <authorList>
            <person name="Jaklitsch W.M."/>
            <person name="Kubicek C.P."/>
        </authorList>
    </citation>
    <scope>CHARACTERIZATION</scope>
</reference>